<feature type="initiator methionine" description="Removed" evidence="2">
    <location>
        <position position="1"/>
    </location>
</feature>
<feature type="chain" id="PRO_0000194936" description="Ubiquitin-like modifier-activating enzyme 1">
    <location>
        <begin position="2"/>
        <end position="1058"/>
    </location>
</feature>
<feature type="repeat" description="1-1">
    <location>
        <begin position="63"/>
        <end position="199"/>
    </location>
</feature>
<feature type="repeat" description="1-2">
    <location>
        <begin position="459"/>
        <end position="611"/>
    </location>
</feature>
<feature type="region of interest" description="Disordered" evidence="6">
    <location>
        <begin position="1"/>
        <end position="47"/>
    </location>
</feature>
<feature type="region of interest" description="2 approximate repeats">
    <location>
        <begin position="63"/>
        <end position="611"/>
    </location>
</feature>
<feature type="compositionally biased region" description="Polar residues" evidence="6">
    <location>
        <begin position="21"/>
        <end position="38"/>
    </location>
</feature>
<feature type="active site" description="Glycyl thioester intermediate" evidence="5">
    <location>
        <position position="632"/>
    </location>
</feature>
<feature type="binding site" evidence="3">
    <location>
        <position position="478"/>
    </location>
    <ligand>
        <name>ATP</name>
        <dbReference type="ChEBI" id="CHEBI:30616"/>
    </ligand>
</feature>
<feature type="binding site" evidence="3">
    <location>
        <position position="504"/>
    </location>
    <ligand>
        <name>ATP</name>
        <dbReference type="ChEBI" id="CHEBI:30616"/>
    </ligand>
</feature>
<feature type="binding site" evidence="3">
    <location>
        <position position="515"/>
    </location>
    <ligand>
        <name>ATP</name>
        <dbReference type="ChEBI" id="CHEBI:30616"/>
    </ligand>
</feature>
<feature type="binding site" evidence="3">
    <location>
        <position position="528"/>
    </location>
    <ligand>
        <name>ATP</name>
        <dbReference type="ChEBI" id="CHEBI:30616"/>
    </ligand>
</feature>
<feature type="binding site" evidence="3">
    <location>
        <begin position="576"/>
        <end position="577"/>
    </location>
    <ligand>
        <name>ATP</name>
        <dbReference type="ChEBI" id="CHEBI:30616"/>
    </ligand>
</feature>
<feature type="modified residue" description="N-acetylserine" evidence="2">
    <location>
        <position position="2"/>
    </location>
</feature>
<feature type="modified residue" description="Phosphoserine" evidence="2">
    <location>
        <position position="4"/>
    </location>
</feature>
<feature type="modified residue" description="Phosphoserine" evidence="2">
    <location>
        <position position="13"/>
    </location>
</feature>
<feature type="modified residue" description="Phosphoserine" evidence="4">
    <location>
        <position position="21"/>
    </location>
</feature>
<feature type="modified residue" description="Phosphoserine" evidence="4">
    <location>
        <position position="24"/>
    </location>
</feature>
<feature type="modified residue" description="Phosphoserine" evidence="2">
    <location>
        <position position="46"/>
    </location>
</feature>
<feature type="modified residue" description="Phosphotyrosine" evidence="4">
    <location>
        <position position="55"/>
    </location>
</feature>
<feature type="modified residue" description="N6-succinyllysine" evidence="4">
    <location>
        <position position="528"/>
    </location>
</feature>
<feature type="modified residue" description="N6-acetyllysine" evidence="2">
    <location>
        <position position="671"/>
    </location>
</feature>
<feature type="modified residue" description="Phosphothreonine" evidence="2">
    <location>
        <position position="800"/>
    </location>
</feature>
<feature type="modified residue" description="Phosphoserine" evidence="2">
    <location>
        <position position="810"/>
    </location>
</feature>
<feature type="modified residue" description="Phosphoserine" evidence="4">
    <location>
        <position position="816"/>
    </location>
</feature>
<feature type="modified residue" description="Phosphoserine" evidence="2">
    <location>
        <position position="820"/>
    </location>
</feature>
<feature type="modified residue" description="Phosphoserine" evidence="2">
    <location>
        <position position="835"/>
    </location>
</feature>
<feature type="modified residue" description="N6-acetyllysine" evidence="2">
    <location>
        <position position="980"/>
    </location>
</feature>
<accession>Q29504</accession>
<comment type="function">
    <text evidence="2 9">Catalyzes the first step in ubiquitin conjugation to mark cellular proteins for degradation through the ubiquitin-proteasome system. Activates ubiquitin by first adenylating its C-terminal glycine residue with ATP, and thereafter linking this residue to the side chain of a cysteine residue in E1, yielding a ubiquitin-E1 thioester and free AMP (PubMed:9322736). Essential for the formation of radiation-induced foci, timely DNA repair and for response to replication stress. Promotes the recruitment of TP53BP1 and BRCA1 at DNA damage sites (By similarity).</text>
</comment>
<comment type="catalytic activity">
    <reaction evidence="9">
        <text>ATP + ubiquitin + [E1 ubiquitin-activating enzyme]-L-cysteine = AMP + diphosphate + S-ubiquitinyl-[E1 ubiquitin-activating enzyme]-L-cysteine.</text>
        <dbReference type="EC" id="6.2.1.45"/>
    </reaction>
</comment>
<comment type="pathway">
    <text evidence="7">Protein modification; protein ubiquitination.</text>
</comment>
<comment type="subunit">
    <text evidence="1">Monomer.</text>
</comment>
<comment type="subcellular location">
    <subcellularLocation>
        <location evidence="2">Cytoplasm</location>
    </subcellularLocation>
    <subcellularLocation>
        <location evidence="2">Mitochondrion</location>
    </subcellularLocation>
    <subcellularLocation>
        <location evidence="2">Nucleus</location>
    </subcellularLocation>
</comment>
<comment type="tissue specificity">
    <text evidence="7">Ubiquitous.</text>
</comment>
<comment type="miscellaneous">
    <text evidence="3">There are two active sites within the E1 molecule, allowing it to accommodate two ubiquitin moieties at a time, with a new ubiquitin forming an adenylate intermediate as the previous one is transferred to the thiol site.</text>
</comment>
<comment type="similarity">
    <text evidence="8">Belongs to the ubiquitin-activating E1 family.</text>
</comment>
<sequence>MSSSPLSKKRRVSGPDPKPGSNCSPAQSVLPQVPSAPTNGMAKNGSEADIDEGLYSRQLYVLGHEAMKRLQTSSVLVSGLRGLGVEIAKNIILGGVKAVTLHDQGTAQWADLSSQFYLREEDIGKNRAEVSQPRLAELNSYVPVTAYTGPLVEDFLSGFQVVVLTNSPLEDQLRVGEFCHSRGIKLVVADTRGLFGQLFCDFGEEMILTDSNGEQPLSTMVSMVTKDNPGVVTCLDEARHGFESGDFVSFSEVQGMTELNGNQPIEIKVLGPYTFSICDTSNFSDYIRGGIVSQVKVPKKISFKSLSASLAEPDFVMTDFAKFSRPAQLHIGFQALHKFCAQHSRPPRPRNEEDAAELVTLARAVNSKASSAVQQDSLDEDLIRNLAFVAAGDLAPINAFIGGLAAQEVMKACSGKFMPIMQWLYFDALECLPEDKESLTEDKCLPRQNRYDGQVAVFGSDLQEKLGRQKYFLVGAGAIGCELLKNFAMIGLGCGENGEIIVTDMDTIEKSNLNRQFLFRPWDVTKLKSDTAAAAVHQMNPHIRVTSHQNRVGPDTERIYDDDFFQTLDGVANALDNVDARMYMDRRCVYYRKPLLESGTLGTKGNVQVVIPFLTESYSSSQDPPEKSIPICTLKNFPNAIEHTLQWARDEFEGLFKQPAENVNQYLTDPKFVERTLRLAGTQPLEVLEAVQRSLVLQLPQSWADCVTWACHHWHTQYSNNIRQLLHNFPPDQLTSSGAPFWSGPKRCPHPLTFDVSNPLHLDYVMAAANLFAQTYGLAGSQDRAAVATLLQSVQVPEFTPKSGVKIHVSDQELQSANASVDDSRLEELKATLPSPDKLPGFKMYPIDFEKDDDSNFHMDFIVAASNLRAENYDIPPADRHKSKLIAGKIIPAIATTTAAVVGLVCLELYKVVQGHRHLDSYKNGFLNLALPFFGFSEPLAAPRHQYYNQEWTLWDRFEVQGLQPNGEEMTLKQFLDYFKTEHKLEITMLSQGVSMLYSFFMPAAKLKERLDQPMTEIVSRVSKRKLGRHVRALVLELCCNDESGEDVEVPYVRYTIR</sequence>
<gene>
    <name type="primary">UBA1</name>
    <name type="synonym">UBE1</name>
</gene>
<protein>
    <recommendedName>
        <fullName>Ubiquitin-like modifier-activating enzyme 1</fullName>
        <ecNumber evidence="9">6.2.1.45</ecNumber>
    </recommendedName>
    <alternativeName>
        <fullName>Ubiquitin-activating enzyme E1</fullName>
    </alternativeName>
</protein>
<evidence type="ECO:0000250" key="1"/>
<evidence type="ECO:0000250" key="2">
    <source>
        <dbReference type="UniProtKB" id="P22314"/>
    </source>
</evidence>
<evidence type="ECO:0000250" key="3">
    <source>
        <dbReference type="UniProtKB" id="P22515"/>
    </source>
</evidence>
<evidence type="ECO:0000250" key="4">
    <source>
        <dbReference type="UniProtKB" id="Q02053"/>
    </source>
</evidence>
<evidence type="ECO:0000255" key="5">
    <source>
        <dbReference type="PROSITE-ProRule" id="PRU10132"/>
    </source>
</evidence>
<evidence type="ECO:0000256" key="6">
    <source>
        <dbReference type="SAM" id="MobiDB-lite"/>
    </source>
</evidence>
<evidence type="ECO:0000269" key="7">
    <source>
    </source>
</evidence>
<evidence type="ECO:0000305" key="8"/>
<evidence type="ECO:0000305" key="9">
    <source>
    </source>
</evidence>
<reference key="1">
    <citation type="journal article" date="1997" name="Gene">
        <title>Rabbit ubiquitin-activating enzyme E1: cDNA cloning, sequence and expression.</title>
        <authorList>
            <person name="Sun B."/>
            <person name="Jeyaseelan K."/>
            <person name="Chung M.C.M."/>
            <person name="Teo T.S."/>
        </authorList>
    </citation>
    <scope>NUCLEOTIDE SEQUENCE [MRNA]</scope>
    <scope>FUNCTION</scope>
    <scope>CATALYTIC ACTIVITY</scope>
    <scope>PATHWAY</scope>
    <scope>TISSUE SPECIFICITY</scope>
    <source>
        <tissue>Heart</tissue>
    </source>
</reference>
<organism>
    <name type="scientific">Oryctolagus cuniculus</name>
    <name type="common">Rabbit</name>
    <dbReference type="NCBI Taxonomy" id="9986"/>
    <lineage>
        <taxon>Eukaryota</taxon>
        <taxon>Metazoa</taxon>
        <taxon>Chordata</taxon>
        <taxon>Craniata</taxon>
        <taxon>Vertebrata</taxon>
        <taxon>Euteleostomi</taxon>
        <taxon>Mammalia</taxon>
        <taxon>Eutheria</taxon>
        <taxon>Euarchontoglires</taxon>
        <taxon>Glires</taxon>
        <taxon>Lagomorpha</taxon>
        <taxon>Leporidae</taxon>
        <taxon>Oryctolagus</taxon>
    </lineage>
</organism>
<dbReference type="EC" id="6.2.1.45" evidence="9"/>
<dbReference type="EMBL" id="U58653">
    <property type="protein sequence ID" value="AAC48768.1"/>
    <property type="molecule type" value="mRNA"/>
</dbReference>
<dbReference type="RefSeq" id="NP_001075840.1">
    <property type="nucleotide sequence ID" value="NM_001082371.2"/>
</dbReference>
<dbReference type="SMR" id="Q29504"/>
<dbReference type="BioGRID" id="1172246">
    <property type="interactions" value="6"/>
</dbReference>
<dbReference type="FunCoup" id="Q29504">
    <property type="interactions" value="2840"/>
</dbReference>
<dbReference type="IntAct" id="Q29504">
    <property type="interactions" value="8"/>
</dbReference>
<dbReference type="STRING" id="9986.ENSOCUP00000007237"/>
<dbReference type="PaxDb" id="9986-ENSOCUP00000007237"/>
<dbReference type="GeneID" id="100009225"/>
<dbReference type="KEGG" id="ocu:100009225"/>
<dbReference type="CTD" id="7317"/>
<dbReference type="eggNOG" id="KOG2012">
    <property type="taxonomic scope" value="Eukaryota"/>
</dbReference>
<dbReference type="InParanoid" id="Q29504"/>
<dbReference type="OrthoDB" id="10252231at2759"/>
<dbReference type="UniPathway" id="UPA00143"/>
<dbReference type="Proteomes" id="UP000001811">
    <property type="component" value="Unplaced"/>
</dbReference>
<dbReference type="GO" id="GO:0005737">
    <property type="term" value="C:cytoplasm"/>
    <property type="evidence" value="ECO:0000250"/>
    <property type="project" value="UniProtKB"/>
</dbReference>
<dbReference type="GO" id="GO:0005739">
    <property type="term" value="C:mitochondrion"/>
    <property type="evidence" value="ECO:0000250"/>
    <property type="project" value="UniProtKB"/>
</dbReference>
<dbReference type="GO" id="GO:0005634">
    <property type="term" value="C:nucleus"/>
    <property type="evidence" value="ECO:0000250"/>
    <property type="project" value="UniProtKB"/>
</dbReference>
<dbReference type="GO" id="GO:0005524">
    <property type="term" value="F:ATP binding"/>
    <property type="evidence" value="ECO:0007669"/>
    <property type="project" value="UniProtKB-KW"/>
</dbReference>
<dbReference type="GO" id="GO:0004839">
    <property type="term" value="F:ubiquitin activating enzyme activity"/>
    <property type="evidence" value="ECO:0007669"/>
    <property type="project" value="UniProtKB-EC"/>
</dbReference>
<dbReference type="GO" id="GO:0006974">
    <property type="term" value="P:DNA damage response"/>
    <property type="evidence" value="ECO:0007669"/>
    <property type="project" value="TreeGrafter"/>
</dbReference>
<dbReference type="GO" id="GO:0006511">
    <property type="term" value="P:ubiquitin-dependent protein catabolic process"/>
    <property type="evidence" value="ECO:0007669"/>
    <property type="project" value="TreeGrafter"/>
</dbReference>
<dbReference type="CDD" id="cd01491">
    <property type="entry name" value="Ube1_repeat1"/>
    <property type="match status" value="1"/>
</dbReference>
<dbReference type="CDD" id="cd01490">
    <property type="entry name" value="Ube1_repeat2"/>
    <property type="match status" value="1"/>
</dbReference>
<dbReference type="FunFam" id="1.10.10.2660:FF:000001">
    <property type="entry name" value="Ubiquitin-activating enzyme E1 1"/>
    <property type="match status" value="1"/>
</dbReference>
<dbReference type="FunFam" id="3.40.50.12550:FF:000001">
    <property type="entry name" value="Ubiquitin-activating enzyme E1 1"/>
    <property type="match status" value="1"/>
</dbReference>
<dbReference type="FunFam" id="3.40.50.720:FF:000015">
    <property type="entry name" value="Ubiquitin-activating enzyme E1 1"/>
    <property type="match status" value="1"/>
</dbReference>
<dbReference type="FunFam" id="3.10.290.60:FF:000002">
    <property type="entry name" value="Ubiquitin-like modifier-activating enzyme 1"/>
    <property type="match status" value="1"/>
</dbReference>
<dbReference type="FunFam" id="2.40.30.180:FF:000001">
    <property type="entry name" value="ubiquitin-like modifier-activating enzyme 1"/>
    <property type="match status" value="1"/>
</dbReference>
<dbReference type="FunFam" id="3.50.50.80:FF:000001">
    <property type="entry name" value="ubiquitin-like modifier-activating enzyme 1"/>
    <property type="match status" value="1"/>
</dbReference>
<dbReference type="Gene3D" id="3.40.50.720">
    <property type="entry name" value="NAD(P)-binding Rossmann-like Domain"/>
    <property type="match status" value="1"/>
</dbReference>
<dbReference type="Gene3D" id="2.40.30.180">
    <property type="entry name" value="Ubiquitin-activating enzyme E1, FCCH domain"/>
    <property type="match status" value="1"/>
</dbReference>
<dbReference type="Gene3D" id="3.50.50.80">
    <property type="entry name" value="Ubiquitin-activating enzyme E1, inactive adenylation domain, subdomain 1"/>
    <property type="match status" value="1"/>
</dbReference>
<dbReference type="Gene3D" id="3.40.50.12550">
    <property type="entry name" value="Ubiquitin-activating enzyme E1, inactive adenylation domain, subdomain 2"/>
    <property type="match status" value="1"/>
</dbReference>
<dbReference type="Gene3D" id="1.10.10.2660">
    <property type="entry name" value="Ubiquitin-activating enzyme E1, SCCH domain"/>
    <property type="match status" value="1"/>
</dbReference>
<dbReference type="Gene3D" id="3.10.290.60">
    <property type="entry name" value="Ubiquitin-activating enzyme E1, UFD domain"/>
    <property type="match status" value="1"/>
</dbReference>
<dbReference type="InterPro" id="IPR032420">
    <property type="entry name" value="E1_4HB"/>
</dbReference>
<dbReference type="InterPro" id="IPR032418">
    <property type="entry name" value="E1_FCCH"/>
</dbReference>
<dbReference type="InterPro" id="IPR042302">
    <property type="entry name" value="E1_FCCH_sf"/>
</dbReference>
<dbReference type="InterPro" id="IPR045886">
    <property type="entry name" value="ThiF/MoeB/HesA"/>
</dbReference>
<dbReference type="InterPro" id="IPR000594">
    <property type="entry name" value="ThiF_NAD_FAD-bd"/>
</dbReference>
<dbReference type="InterPro" id="IPR018965">
    <property type="entry name" value="Ub-activating_enz_E1_C"/>
</dbReference>
<dbReference type="InterPro" id="IPR042449">
    <property type="entry name" value="Ub-E1_IAD_1"/>
</dbReference>
<dbReference type="InterPro" id="IPR038252">
    <property type="entry name" value="UBA_E1_C_sf"/>
</dbReference>
<dbReference type="InterPro" id="IPR019572">
    <property type="entry name" value="UBA_E1_SCCH"/>
</dbReference>
<dbReference type="InterPro" id="IPR042063">
    <property type="entry name" value="Ubi_acti_E1_SCCH"/>
</dbReference>
<dbReference type="InterPro" id="IPR035985">
    <property type="entry name" value="Ubiquitin-activating_enz"/>
</dbReference>
<dbReference type="InterPro" id="IPR018075">
    <property type="entry name" value="UBQ-activ_enz_E1"/>
</dbReference>
<dbReference type="InterPro" id="IPR018074">
    <property type="entry name" value="UBQ-activ_enz_E1_CS"/>
</dbReference>
<dbReference type="InterPro" id="IPR033127">
    <property type="entry name" value="UBQ-activ_enz_E1_Cys_AS"/>
</dbReference>
<dbReference type="InterPro" id="IPR000011">
    <property type="entry name" value="UBQ/SUMO-activ_enz_E1-like"/>
</dbReference>
<dbReference type="NCBIfam" id="TIGR01408">
    <property type="entry name" value="Ube1"/>
    <property type="match status" value="1"/>
</dbReference>
<dbReference type="PANTHER" id="PTHR10953">
    <property type="entry name" value="UBIQUITIN-ACTIVATING ENZYME E1"/>
    <property type="match status" value="1"/>
</dbReference>
<dbReference type="PANTHER" id="PTHR10953:SF155">
    <property type="entry name" value="UBIQUITIN-LIKE MODIFIER-ACTIVATING ENZYME 1"/>
    <property type="match status" value="1"/>
</dbReference>
<dbReference type="Pfam" id="PF16191">
    <property type="entry name" value="E1_4HB"/>
    <property type="match status" value="1"/>
</dbReference>
<dbReference type="Pfam" id="PF16190">
    <property type="entry name" value="E1_FCCH"/>
    <property type="match status" value="1"/>
</dbReference>
<dbReference type="Pfam" id="PF09358">
    <property type="entry name" value="E1_UFD"/>
    <property type="match status" value="1"/>
</dbReference>
<dbReference type="Pfam" id="PF00899">
    <property type="entry name" value="ThiF"/>
    <property type="match status" value="2"/>
</dbReference>
<dbReference type="Pfam" id="PF10585">
    <property type="entry name" value="UBA_E1_SCCH"/>
    <property type="match status" value="1"/>
</dbReference>
<dbReference type="PRINTS" id="PR01849">
    <property type="entry name" value="UBIQUITINACT"/>
</dbReference>
<dbReference type="SMART" id="SM00985">
    <property type="entry name" value="UBA_e1_C"/>
    <property type="match status" value="1"/>
</dbReference>
<dbReference type="SUPFAM" id="SSF69572">
    <property type="entry name" value="Activating enzymes of the ubiquitin-like proteins"/>
    <property type="match status" value="2"/>
</dbReference>
<dbReference type="PROSITE" id="PS00536">
    <property type="entry name" value="UBIQUITIN_ACTIVAT_1"/>
    <property type="match status" value="1"/>
</dbReference>
<dbReference type="PROSITE" id="PS00865">
    <property type="entry name" value="UBIQUITIN_ACTIVAT_2"/>
    <property type="match status" value="1"/>
</dbReference>
<name>UBA1_RABIT</name>
<keyword id="KW-0007">Acetylation</keyword>
<keyword id="KW-0067">ATP-binding</keyword>
<keyword id="KW-0963">Cytoplasm</keyword>
<keyword id="KW-0436">Ligase</keyword>
<keyword id="KW-0496">Mitochondrion</keyword>
<keyword id="KW-0547">Nucleotide-binding</keyword>
<keyword id="KW-0539">Nucleus</keyword>
<keyword id="KW-0597">Phosphoprotein</keyword>
<keyword id="KW-1185">Reference proteome</keyword>
<keyword id="KW-0677">Repeat</keyword>
<keyword id="KW-0833">Ubl conjugation pathway</keyword>
<proteinExistence type="evidence at protein level"/>